<reference key="1">
    <citation type="journal article" date="2005" name="Nucleic Acids Res.">
        <title>The liver-enriched transcription factor CREB-H is a growth suppressor protein underexpressed in hepatocellular carcinoma.</title>
        <authorList>
            <person name="Chin K.-T."/>
            <person name="Zhou H.-J."/>
            <person name="Wong C.-M."/>
            <person name="Lee J.M.-F."/>
            <person name="Chan C.-P."/>
            <person name="Qiang B.-Q."/>
            <person name="Yuan J.-G."/>
            <person name="Ng I.-O."/>
            <person name="Jin D.-Y."/>
        </authorList>
    </citation>
    <scope>NUCLEOTIDE SEQUENCE [MRNA]</scope>
    <scope>FUNCTION</scope>
    <scope>SUBCELLULAR LOCATION</scope>
    <scope>TISSUE SPECIFICITY</scope>
    <source>
        <strain>C57BL/10</strain>
        <tissue>Liver</tissue>
    </source>
</reference>
<reference key="2">
    <citation type="journal article" date="2005" name="Science">
        <title>The transcriptional landscape of the mammalian genome.</title>
        <authorList>
            <person name="Carninci P."/>
            <person name="Kasukawa T."/>
            <person name="Katayama S."/>
            <person name="Gough J."/>
            <person name="Frith M.C."/>
            <person name="Maeda N."/>
            <person name="Oyama R."/>
            <person name="Ravasi T."/>
            <person name="Lenhard B."/>
            <person name="Wells C."/>
            <person name="Kodzius R."/>
            <person name="Shimokawa K."/>
            <person name="Bajic V.B."/>
            <person name="Brenner S.E."/>
            <person name="Batalov S."/>
            <person name="Forrest A.R."/>
            <person name="Zavolan M."/>
            <person name="Davis M.J."/>
            <person name="Wilming L.G."/>
            <person name="Aidinis V."/>
            <person name="Allen J.E."/>
            <person name="Ambesi-Impiombato A."/>
            <person name="Apweiler R."/>
            <person name="Aturaliya R.N."/>
            <person name="Bailey T.L."/>
            <person name="Bansal M."/>
            <person name="Baxter L."/>
            <person name="Beisel K.W."/>
            <person name="Bersano T."/>
            <person name="Bono H."/>
            <person name="Chalk A.M."/>
            <person name="Chiu K.P."/>
            <person name="Choudhary V."/>
            <person name="Christoffels A."/>
            <person name="Clutterbuck D.R."/>
            <person name="Crowe M.L."/>
            <person name="Dalla E."/>
            <person name="Dalrymple B.P."/>
            <person name="de Bono B."/>
            <person name="Della Gatta G."/>
            <person name="di Bernardo D."/>
            <person name="Down T."/>
            <person name="Engstrom P."/>
            <person name="Fagiolini M."/>
            <person name="Faulkner G."/>
            <person name="Fletcher C.F."/>
            <person name="Fukushima T."/>
            <person name="Furuno M."/>
            <person name="Futaki S."/>
            <person name="Gariboldi M."/>
            <person name="Georgii-Hemming P."/>
            <person name="Gingeras T.R."/>
            <person name="Gojobori T."/>
            <person name="Green R.E."/>
            <person name="Gustincich S."/>
            <person name="Harbers M."/>
            <person name="Hayashi Y."/>
            <person name="Hensch T.K."/>
            <person name="Hirokawa N."/>
            <person name="Hill D."/>
            <person name="Huminiecki L."/>
            <person name="Iacono M."/>
            <person name="Ikeo K."/>
            <person name="Iwama A."/>
            <person name="Ishikawa T."/>
            <person name="Jakt M."/>
            <person name="Kanapin A."/>
            <person name="Katoh M."/>
            <person name="Kawasawa Y."/>
            <person name="Kelso J."/>
            <person name="Kitamura H."/>
            <person name="Kitano H."/>
            <person name="Kollias G."/>
            <person name="Krishnan S.P."/>
            <person name="Kruger A."/>
            <person name="Kummerfeld S.K."/>
            <person name="Kurochkin I.V."/>
            <person name="Lareau L.F."/>
            <person name="Lazarevic D."/>
            <person name="Lipovich L."/>
            <person name="Liu J."/>
            <person name="Liuni S."/>
            <person name="McWilliam S."/>
            <person name="Madan Babu M."/>
            <person name="Madera M."/>
            <person name="Marchionni L."/>
            <person name="Matsuda H."/>
            <person name="Matsuzawa S."/>
            <person name="Miki H."/>
            <person name="Mignone F."/>
            <person name="Miyake S."/>
            <person name="Morris K."/>
            <person name="Mottagui-Tabar S."/>
            <person name="Mulder N."/>
            <person name="Nakano N."/>
            <person name="Nakauchi H."/>
            <person name="Ng P."/>
            <person name="Nilsson R."/>
            <person name="Nishiguchi S."/>
            <person name="Nishikawa S."/>
            <person name="Nori F."/>
            <person name="Ohara O."/>
            <person name="Okazaki Y."/>
            <person name="Orlando V."/>
            <person name="Pang K.C."/>
            <person name="Pavan W.J."/>
            <person name="Pavesi G."/>
            <person name="Pesole G."/>
            <person name="Petrovsky N."/>
            <person name="Piazza S."/>
            <person name="Reed J."/>
            <person name="Reid J.F."/>
            <person name="Ring B.Z."/>
            <person name="Ringwald M."/>
            <person name="Rost B."/>
            <person name="Ruan Y."/>
            <person name="Salzberg S.L."/>
            <person name="Sandelin A."/>
            <person name="Schneider C."/>
            <person name="Schoenbach C."/>
            <person name="Sekiguchi K."/>
            <person name="Semple C.A."/>
            <person name="Seno S."/>
            <person name="Sessa L."/>
            <person name="Sheng Y."/>
            <person name="Shibata Y."/>
            <person name="Shimada H."/>
            <person name="Shimada K."/>
            <person name="Silva D."/>
            <person name="Sinclair B."/>
            <person name="Sperling S."/>
            <person name="Stupka E."/>
            <person name="Sugiura K."/>
            <person name="Sultana R."/>
            <person name="Takenaka Y."/>
            <person name="Taki K."/>
            <person name="Tammoja K."/>
            <person name="Tan S.L."/>
            <person name="Tang S."/>
            <person name="Taylor M.S."/>
            <person name="Tegner J."/>
            <person name="Teichmann S.A."/>
            <person name="Ueda H.R."/>
            <person name="van Nimwegen E."/>
            <person name="Verardo R."/>
            <person name="Wei C.L."/>
            <person name="Yagi K."/>
            <person name="Yamanishi H."/>
            <person name="Zabarovsky E."/>
            <person name="Zhu S."/>
            <person name="Zimmer A."/>
            <person name="Hide W."/>
            <person name="Bult C."/>
            <person name="Grimmond S.M."/>
            <person name="Teasdale R.D."/>
            <person name="Liu E.T."/>
            <person name="Brusic V."/>
            <person name="Quackenbush J."/>
            <person name="Wahlestedt C."/>
            <person name="Mattick J.S."/>
            <person name="Hume D.A."/>
            <person name="Kai C."/>
            <person name="Sasaki D."/>
            <person name="Tomaru Y."/>
            <person name="Fukuda S."/>
            <person name="Kanamori-Katayama M."/>
            <person name="Suzuki M."/>
            <person name="Aoki J."/>
            <person name="Arakawa T."/>
            <person name="Iida J."/>
            <person name="Imamura K."/>
            <person name="Itoh M."/>
            <person name="Kato T."/>
            <person name="Kawaji H."/>
            <person name="Kawagashira N."/>
            <person name="Kawashima T."/>
            <person name="Kojima M."/>
            <person name="Kondo S."/>
            <person name="Konno H."/>
            <person name="Nakano K."/>
            <person name="Ninomiya N."/>
            <person name="Nishio T."/>
            <person name="Okada M."/>
            <person name="Plessy C."/>
            <person name="Shibata K."/>
            <person name="Shiraki T."/>
            <person name="Suzuki S."/>
            <person name="Tagami M."/>
            <person name="Waki K."/>
            <person name="Watahiki A."/>
            <person name="Okamura-Oho Y."/>
            <person name="Suzuki H."/>
            <person name="Kawai J."/>
            <person name="Hayashizaki Y."/>
        </authorList>
    </citation>
    <scope>NUCLEOTIDE SEQUENCE [LARGE SCALE MRNA]</scope>
    <source>
        <strain>C57BL/6J</strain>
        <tissue>Ovary</tissue>
        <tissue>Uterus</tissue>
    </source>
</reference>
<reference key="3">
    <citation type="journal article" date="2004" name="Genome Res.">
        <title>The status, quality, and expansion of the NIH full-length cDNA project: the Mammalian Gene Collection (MGC).</title>
        <authorList>
            <consortium name="The MGC Project Team"/>
        </authorList>
    </citation>
    <scope>NUCLEOTIDE SEQUENCE [LARGE SCALE MRNA]</scope>
    <source>
        <strain>FVB/N</strain>
        <tissue>Liver</tissue>
    </source>
</reference>
<reference key="4">
    <citation type="journal article" date="2006" name="Cell">
        <title>Endoplasmic reticulum stress activates cleavage of CREBH to induce a systemic inflammatory response.</title>
        <authorList>
            <person name="Zhang K."/>
            <person name="Shen X."/>
            <person name="Wu J."/>
            <person name="Sakaki K."/>
            <person name="Saunders T."/>
            <person name="Rutkowski D.T."/>
            <person name="Back S.H."/>
            <person name="Kaufman R.J."/>
        </authorList>
    </citation>
    <scope>INDUCTION</scope>
</reference>
<reference key="5">
    <citation type="journal article" date="2011" name="Nat. Med.">
        <title>The transcription factor cyclic AMP-responsive element-binding protein H regulates triglyceride metabolism.</title>
        <authorList>
            <person name="Lee J.H."/>
            <person name="Giannikopoulos P."/>
            <person name="Duncan S.A."/>
            <person name="Wang J."/>
            <person name="Johansen C.T."/>
            <person name="Brown J.D."/>
            <person name="Plutzky J."/>
            <person name="Hegele R.A."/>
            <person name="Glimcher L.H."/>
            <person name="Lee A.H."/>
        </authorList>
    </citation>
    <scope>FUNCTION</scope>
    <scope>TISSUE SPECIFICITY</scope>
    <scope>DISRUPTION PHENOTYPE</scope>
</reference>
<reference key="6">
    <citation type="journal article" date="2018" name="EMBO J.">
        <title>HRD1-ERAD controls production of the hepatokine FGF21 through CREBH polyubiquitination.</title>
        <authorList>
            <person name="Wei J."/>
            <person name="Chen L."/>
            <person name="Li F."/>
            <person name="Yuan Y."/>
            <person name="Wang Y."/>
            <person name="Xia W."/>
            <person name="Zhang Y."/>
            <person name="Xu Y."/>
            <person name="Yang Z."/>
            <person name="Gao B."/>
            <person name="Jin C."/>
            <person name="Melo-Cardenas J."/>
            <person name="Green R.M."/>
            <person name="Pan H."/>
            <person name="Wang J."/>
            <person name="He F."/>
            <person name="Zhang K."/>
            <person name="Fang D."/>
        </authorList>
    </citation>
    <scope>FUNCTION</scope>
    <scope>SUBCELLULAR LOCATION</scope>
    <scope>TISSUE SPECIFICITY</scope>
    <scope>INDUCTION</scope>
    <scope>INTERACTION WITH SYNV1</scope>
</reference>
<proteinExistence type="evidence at protein level"/>
<name>CR3L3_MOUSE</name>
<feature type="chain" id="PRO_0000288075" description="Cyclic AMP-responsive element-binding protein 3-like protein 3">
    <location>
        <begin position="1"/>
        <end position="479"/>
    </location>
</feature>
<feature type="chain" id="PRO_0000307123" description="Processed cyclic AMP-responsive element-binding protein 3-like protein 3">
    <location>
        <begin position="1"/>
        <end status="unknown"/>
    </location>
</feature>
<feature type="topological domain" description="Cytoplasmic" evidence="3">
    <location>
        <begin position="1"/>
        <end position="317"/>
    </location>
</feature>
<feature type="transmembrane region" description="Helical; Signal-anchor for type II membrane protein" evidence="3">
    <location>
        <begin position="318"/>
        <end position="338"/>
    </location>
</feature>
<feature type="topological domain" description="Lumenal" evidence="3">
    <location>
        <begin position="339"/>
        <end position="479"/>
    </location>
</feature>
<feature type="domain" description="bZIP" evidence="4">
    <location>
        <begin position="239"/>
        <end position="302"/>
    </location>
</feature>
<feature type="region of interest" description="Disordered" evidence="5">
    <location>
        <begin position="67"/>
        <end position="144"/>
    </location>
</feature>
<feature type="region of interest" description="Basic motif" evidence="4">
    <location>
        <begin position="241"/>
        <end position="270"/>
    </location>
</feature>
<feature type="region of interest" description="Leucine-zipper" evidence="4">
    <location>
        <begin position="281"/>
        <end position="302"/>
    </location>
</feature>
<feature type="compositionally biased region" description="Polar residues" evidence="5">
    <location>
        <begin position="98"/>
        <end position="110"/>
    </location>
</feature>
<feature type="site" description="Cleavage; by PS1" evidence="1">
    <location>
        <begin position="359"/>
        <end position="360"/>
    </location>
</feature>
<feature type="glycosylation site" description="N-linked (GlcNAc...) asparagine" evidence="3">
    <location>
        <position position="411"/>
    </location>
</feature>
<feature type="glycosylation site" description="N-linked (GlcNAc...) asparagine" evidence="3">
    <location>
        <position position="418"/>
    </location>
</feature>
<feature type="glycosylation site" description="N-linked (GlcNAc...) asparagine" evidence="3">
    <location>
        <position position="425"/>
    </location>
</feature>
<feature type="cross-link" description="Glycyl lysine isopeptide (Lys-Gly) (interchain with G-Cter in ubiquitin)" evidence="2">
    <location>
        <position position="290"/>
    </location>
</feature>
<feature type="sequence conflict" description="In Ref. 2; BAC34115." evidence="10" ref="2">
    <original>R</original>
    <variation>L</variation>
    <location>
        <position position="270"/>
    </location>
</feature>
<protein>
    <recommendedName>
        <fullName>Cyclic AMP-responsive element-binding protein 3-like protein 3</fullName>
        <shortName>cAMP-responsive element-binding protein 3-like protein 3</shortName>
    </recommendedName>
    <alternativeName>
        <fullName>Transcription factor CREB-H</fullName>
    </alternativeName>
    <component>
        <recommendedName>
            <fullName>Processed cyclic AMP-responsive element-binding protein 3-like protein 3</fullName>
        </recommendedName>
    </component>
</protein>
<comment type="function">
    <text evidence="1 6 8 9">Transcription factor that may act during endoplasmic reticulum (ER) stress by activating unfolded protein response target genes. Activated in response to cAMP stimulation. Binds to the cAMP response element (CRE). Activates transcription through box-B element (By similarity). Activates transcription through CRE. May function synergistically with ATF6. In acute inflammatory response, may activate expression of acute phase response (APR) genes. May be involved in growth suppression. Regulates FGF21 transcription (PubMed:30389664). Plays a crucial role in the regulation of triglyceride metabolism and is required for the maintenance of normal plasma triglyceride concentrations (PubMed:21666694).</text>
</comment>
<comment type="subunit">
    <text evidence="1 2 9">Binds DNA as a dimer. May form homodimers (By similarity). Interacts with ATF6 (By similarity). Interacts with SYNV1/HRD1; this interaction leads to CREB3L3 ubiquitination and proteasomal degradation (PubMed:30389664).</text>
</comment>
<comment type="subcellular location">
    <subcellularLocation>
        <location evidence="2">Endoplasmic reticulum membrane</location>
        <topology evidence="2">Single-pass type II membrane protein</topology>
    </subcellularLocation>
</comment>
<comment type="subcellular location">
    <molecule>Processed cyclic AMP-responsive element-binding protein 3-like protein 3</molecule>
    <subcellularLocation>
        <location evidence="2">Nucleus</location>
    </subcellularLocation>
    <text evidence="1">Under ER stress the cleaved N-terminal cytoplasmic domain translocates into the nucleus.</text>
</comment>
<comment type="tissue specificity">
    <text evidence="6 8 9">Expressed in adult liver (at protein level) and small intestine.</text>
</comment>
<comment type="induction">
    <text evidence="7 9">By IL6. Pro-inflammatory cytokines and lipopolysaccharide activate the UPR and induce cleavage of CREBH in the liver (PubMed:16469704). Down-regulated in the liver during fasting-refeeding. This down-regulation may occur at the postranscriptional level and may be mediated by SYNV1/HRD1, which induces CREB3L3 ubiquitination and proteasomal degradation (PubMed:30389664).</text>
</comment>
<comment type="PTM">
    <text evidence="1">Following ER stress a fragment containing the cytoplasmic transcription factor domain is released by proteolysis. The cleavage seems to be performed sequentially by site-1 and site-2 proteases (By similarity).</text>
</comment>
<comment type="PTM">
    <text evidence="1">N-glycosylation is required for optimal proteolytic activation.</text>
</comment>
<comment type="PTM">
    <text evidence="2">Ubiquitinated at Lys-290 by SYNV1/HRD1 via 'Lys-27'-linked ubiquitin.</text>
</comment>
<comment type="disruption phenotype">
    <text evidence="8">Knockout mice display decreased triglyceride clearance from plasma resulting in hypertriglyceridemia.</text>
</comment>
<comment type="similarity">
    <text evidence="10">Belongs to the bZIP family. ATF subfamily.</text>
</comment>
<organism>
    <name type="scientific">Mus musculus</name>
    <name type="common">Mouse</name>
    <dbReference type="NCBI Taxonomy" id="10090"/>
    <lineage>
        <taxon>Eukaryota</taxon>
        <taxon>Metazoa</taxon>
        <taxon>Chordata</taxon>
        <taxon>Craniata</taxon>
        <taxon>Vertebrata</taxon>
        <taxon>Euteleostomi</taxon>
        <taxon>Mammalia</taxon>
        <taxon>Eutheria</taxon>
        <taxon>Euarchontoglires</taxon>
        <taxon>Glires</taxon>
        <taxon>Rodentia</taxon>
        <taxon>Myomorpha</taxon>
        <taxon>Muroidea</taxon>
        <taxon>Muridae</taxon>
        <taxon>Murinae</taxon>
        <taxon>Mus</taxon>
        <taxon>Mus</taxon>
    </lineage>
</organism>
<dbReference type="EMBL" id="AF392874">
    <property type="protein sequence ID" value="AAM73673.1"/>
    <property type="molecule type" value="mRNA"/>
</dbReference>
<dbReference type="EMBL" id="AK050186">
    <property type="protein sequence ID" value="BAC34115.1"/>
    <property type="molecule type" value="mRNA"/>
</dbReference>
<dbReference type="EMBL" id="AK077258">
    <property type="protein sequence ID" value="BAC36714.1"/>
    <property type="molecule type" value="mRNA"/>
</dbReference>
<dbReference type="EMBL" id="BC010786">
    <property type="protein sequence ID" value="AAH10786.1"/>
    <property type="molecule type" value="mRNA"/>
</dbReference>
<dbReference type="EMBL" id="BC028820">
    <property type="protein sequence ID" value="AAH28820.1"/>
    <property type="molecule type" value="mRNA"/>
</dbReference>
<dbReference type="CCDS" id="CCDS24043.1"/>
<dbReference type="RefSeq" id="NP_001369747.1">
    <property type="nucleotide sequence ID" value="NM_001382818.1"/>
</dbReference>
<dbReference type="RefSeq" id="NP_663340.1">
    <property type="nucleotide sequence ID" value="NM_145365.3"/>
</dbReference>
<dbReference type="SMR" id="Q91XE9"/>
<dbReference type="BioGRID" id="229005">
    <property type="interactions" value="2"/>
</dbReference>
<dbReference type="CORUM" id="Q91XE9"/>
<dbReference type="FunCoup" id="Q91XE9">
    <property type="interactions" value="1371"/>
</dbReference>
<dbReference type="STRING" id="10090.ENSMUSP00000112836"/>
<dbReference type="GlyCosmos" id="Q91XE9">
    <property type="glycosylation" value="3 sites, No reported glycans"/>
</dbReference>
<dbReference type="GlyGen" id="Q91XE9">
    <property type="glycosylation" value="4 sites"/>
</dbReference>
<dbReference type="iPTMnet" id="Q91XE9"/>
<dbReference type="PhosphoSitePlus" id="Q91XE9"/>
<dbReference type="PaxDb" id="10090-ENSMUSP00000112836"/>
<dbReference type="ProteomicsDB" id="285298"/>
<dbReference type="Antibodypedia" id="42393">
    <property type="antibodies" value="60 antibodies from 19 providers"/>
</dbReference>
<dbReference type="DNASU" id="208677"/>
<dbReference type="Ensembl" id="ENSMUST00000117422.2">
    <property type="protein sequence ID" value="ENSMUSP00000112836.2"/>
    <property type="gene ID" value="ENSMUSG00000035041.9"/>
</dbReference>
<dbReference type="GeneID" id="208677"/>
<dbReference type="KEGG" id="mmu:208677"/>
<dbReference type="UCSC" id="uc007gfw.1">
    <property type="organism name" value="mouse"/>
</dbReference>
<dbReference type="AGR" id="MGI:2384786"/>
<dbReference type="CTD" id="84699"/>
<dbReference type="MGI" id="MGI:2384786">
    <property type="gene designation" value="Creb3l3"/>
</dbReference>
<dbReference type="VEuPathDB" id="HostDB:ENSMUSG00000035041"/>
<dbReference type="eggNOG" id="KOG0709">
    <property type="taxonomic scope" value="Eukaryota"/>
</dbReference>
<dbReference type="GeneTree" id="ENSGT00940000159261"/>
<dbReference type="HOGENOM" id="CLU_047257_1_0_1"/>
<dbReference type="InParanoid" id="Q91XE9"/>
<dbReference type="OMA" id="DSHFFGT"/>
<dbReference type="OrthoDB" id="674948at2759"/>
<dbReference type="PhylomeDB" id="Q91XE9"/>
<dbReference type="TreeFam" id="TF316079"/>
<dbReference type="Reactome" id="R-MMU-8874211">
    <property type="pathway name" value="CREB3 factors activate genes"/>
</dbReference>
<dbReference type="BioGRID-ORCS" id="208677">
    <property type="hits" value="2 hits in 80 CRISPR screens"/>
</dbReference>
<dbReference type="ChiTaRS" id="Creb3l3">
    <property type="organism name" value="mouse"/>
</dbReference>
<dbReference type="PRO" id="PR:Q91XE9"/>
<dbReference type="Proteomes" id="UP000000589">
    <property type="component" value="Chromosome 10"/>
</dbReference>
<dbReference type="RNAct" id="Q91XE9">
    <property type="molecule type" value="protein"/>
</dbReference>
<dbReference type="Bgee" id="ENSMUSG00000035041">
    <property type="expression patterns" value="Expressed in small intestine Peyer's patch and 91 other cell types or tissues"/>
</dbReference>
<dbReference type="GO" id="GO:0005829">
    <property type="term" value="C:cytosol"/>
    <property type="evidence" value="ECO:0000304"/>
    <property type="project" value="Reactome"/>
</dbReference>
<dbReference type="GO" id="GO:0005789">
    <property type="term" value="C:endoplasmic reticulum membrane"/>
    <property type="evidence" value="ECO:0000304"/>
    <property type="project" value="Reactome"/>
</dbReference>
<dbReference type="GO" id="GO:0016020">
    <property type="term" value="C:membrane"/>
    <property type="evidence" value="ECO:0000314"/>
    <property type="project" value="ParkinsonsUK-UCL"/>
</dbReference>
<dbReference type="GO" id="GO:0005654">
    <property type="term" value="C:nucleoplasm"/>
    <property type="evidence" value="ECO:0000304"/>
    <property type="project" value="Reactome"/>
</dbReference>
<dbReference type="GO" id="GO:0005634">
    <property type="term" value="C:nucleus"/>
    <property type="evidence" value="ECO:0000314"/>
    <property type="project" value="ParkinsonsUK-UCL"/>
</dbReference>
<dbReference type="GO" id="GO:0001228">
    <property type="term" value="F:DNA-binding transcription activator activity, RNA polymerase II-specific"/>
    <property type="evidence" value="ECO:0007669"/>
    <property type="project" value="Ensembl"/>
</dbReference>
<dbReference type="GO" id="GO:0046982">
    <property type="term" value="F:protein heterodimerization activity"/>
    <property type="evidence" value="ECO:0007669"/>
    <property type="project" value="Ensembl"/>
</dbReference>
<dbReference type="GO" id="GO:0042803">
    <property type="term" value="F:protein homodimerization activity"/>
    <property type="evidence" value="ECO:0007669"/>
    <property type="project" value="Ensembl"/>
</dbReference>
<dbReference type="GO" id="GO:0000977">
    <property type="term" value="F:RNA polymerase II transcription regulatory region sequence-specific DNA binding"/>
    <property type="evidence" value="ECO:0007669"/>
    <property type="project" value="Ensembl"/>
</dbReference>
<dbReference type="GO" id="GO:0045944">
    <property type="term" value="P:positive regulation of transcription by RNA polymerase II"/>
    <property type="evidence" value="ECO:0000315"/>
    <property type="project" value="ParkinsonsUK-UCL"/>
</dbReference>
<dbReference type="GO" id="GO:0034976">
    <property type="term" value="P:response to endoplasmic reticulum stress"/>
    <property type="evidence" value="ECO:0000315"/>
    <property type="project" value="ParkinsonsUK-UCL"/>
</dbReference>
<dbReference type="GO" id="GO:0006986">
    <property type="term" value="P:response to unfolded protein"/>
    <property type="evidence" value="ECO:0007669"/>
    <property type="project" value="UniProtKB-KW"/>
</dbReference>
<dbReference type="CDD" id="cd14689">
    <property type="entry name" value="bZIP_CREB3"/>
    <property type="match status" value="1"/>
</dbReference>
<dbReference type="FunFam" id="1.20.5.170:FF:000042">
    <property type="entry name" value="Cyclic AMP-responsive element-binding protein 3-like protein 3"/>
    <property type="match status" value="1"/>
</dbReference>
<dbReference type="Gene3D" id="1.20.5.170">
    <property type="match status" value="1"/>
</dbReference>
<dbReference type="InterPro" id="IPR004827">
    <property type="entry name" value="bZIP"/>
</dbReference>
<dbReference type="InterPro" id="IPR046347">
    <property type="entry name" value="bZIP_sf"/>
</dbReference>
<dbReference type="InterPro" id="IPR051381">
    <property type="entry name" value="CREB_ATF_subfamily"/>
</dbReference>
<dbReference type="PANTHER" id="PTHR45996">
    <property type="entry name" value="AGAP001464-PB"/>
    <property type="match status" value="1"/>
</dbReference>
<dbReference type="PANTHER" id="PTHR45996:SF1">
    <property type="entry name" value="CYCLIC AMP-RESPONSIVE ELEMENT-BINDING PROTEIN 3-LIKE PROTEIN 3"/>
    <property type="match status" value="1"/>
</dbReference>
<dbReference type="Pfam" id="PF00170">
    <property type="entry name" value="bZIP_1"/>
    <property type="match status" value="1"/>
</dbReference>
<dbReference type="SMART" id="SM00338">
    <property type="entry name" value="BRLZ"/>
    <property type="match status" value="1"/>
</dbReference>
<dbReference type="SUPFAM" id="SSF57959">
    <property type="entry name" value="Leucine zipper domain"/>
    <property type="match status" value="1"/>
</dbReference>
<dbReference type="PROSITE" id="PS50217">
    <property type="entry name" value="BZIP"/>
    <property type="match status" value="1"/>
</dbReference>
<dbReference type="PROSITE" id="PS00036">
    <property type="entry name" value="BZIP_BASIC"/>
    <property type="match status" value="1"/>
</dbReference>
<evidence type="ECO:0000250" key="1"/>
<evidence type="ECO:0000250" key="2">
    <source>
        <dbReference type="UniProtKB" id="Q68CJ9"/>
    </source>
</evidence>
<evidence type="ECO:0000255" key="3"/>
<evidence type="ECO:0000255" key="4">
    <source>
        <dbReference type="PROSITE-ProRule" id="PRU00978"/>
    </source>
</evidence>
<evidence type="ECO:0000256" key="5">
    <source>
        <dbReference type="SAM" id="MobiDB-lite"/>
    </source>
</evidence>
<evidence type="ECO:0000269" key="6">
    <source>
    </source>
</evidence>
<evidence type="ECO:0000269" key="7">
    <source>
    </source>
</evidence>
<evidence type="ECO:0000269" key="8">
    <source>
    </source>
</evidence>
<evidence type="ECO:0000269" key="9">
    <source>
    </source>
</evidence>
<evidence type="ECO:0000305" key="10"/>
<keyword id="KW-0010">Activator</keyword>
<keyword id="KW-0238">DNA-binding</keyword>
<keyword id="KW-0256">Endoplasmic reticulum</keyword>
<keyword id="KW-0325">Glycoprotein</keyword>
<keyword id="KW-1017">Isopeptide bond</keyword>
<keyword id="KW-0472">Membrane</keyword>
<keyword id="KW-0539">Nucleus</keyword>
<keyword id="KW-1185">Reference proteome</keyword>
<keyword id="KW-0735">Signal-anchor</keyword>
<keyword id="KW-0804">Transcription</keyword>
<keyword id="KW-0805">Transcription regulation</keyword>
<keyword id="KW-0812">Transmembrane</keyword>
<keyword id="KW-1133">Transmembrane helix</keyword>
<keyword id="KW-0832">Ubl conjugation</keyword>
<keyword id="KW-0834">Unfolded protein response</keyword>
<gene>
    <name type="primary">Creb3l3</name>
    <name type="synonym">Crebh</name>
</gene>
<accession>Q91XE9</accession>
<accession>Q8BWS0</accession>
<sequence length="479" mass="52145">MDGDIAAGKMASPVCAMAPLDSMEVLDLLFDRQDGILRNVELAEGWILAREEQKVLLNSDSDEFLNCILGPGDSDPSSPLWSPADSDSGISEDLPSDPQDTPPRSGTEPANTVARCHTREQGKGPCPSYLPSTPCPEPPRTQVQESSVAIDLDMWSTDTLYPEEPAGSPSRFNLTVKELLLSGGSGDLQQHSLAASQLLGPGSGHCQELVLTEDEKKLLAKEGVTLPTQLPLTKYEERVLKKIRRKIRNKQSAQESRKKKKEYIDGLENRMSACTAQNQELQRKVLHLEKQNLSLLEQLKHLQALVVQSTSKPAHAGTCIAVLLLSFALIILPSISPFNSNKVDSPGDFVPVRVFSRTLHNHAASRVAPDVTPGSEVPGPWPDVGTPHKGPSSGGLSADWGNFLEIPMLDNLTEELDNSTLVLANSTEDLGRATLLDWVASEPLLSPGRVGLEIPGEMWLSWVPRWLRVRLVQDALGVL</sequence>